<gene>
    <name type="primary">SLC52A3</name>
    <name type="synonym">C20orf54</name>
    <name type="synonym">RFT2</name>
    <name type="synonym">RFVT3</name>
</gene>
<accession>Q9NQ40</accession>
<accession>A0A2I6BQ49</accession>
<accession>A8K6P1</accession>
<accession>K0A6P4</accession>
<accession>Q5W1A0</accession>
<accession>Q5W1A1</accession>
<accession>Q8NCL7</accession>
<accession>Q96GD5</accession>
<comment type="function">
    <text evidence="5 9 13 14 17">Plasma membrane transporter mediating the uptake by cells of the water soluble vitamin B2/riboflavin that plays a key role in biochemical oxidation-reduction reactions of the carbohydrate, lipid, and amino acid metabolism (PubMed:20463145, PubMed:22273710, PubMed:24264046, PubMed:27702554). Humans are unable to synthesize vitamin B2/riboflavin and must obtain it via intestinal absorption (PubMed:20463145).</text>
</comment>
<comment type="catalytic activity">
    <reaction evidence="5 9 13 14">
        <text>riboflavin(in) = riboflavin(out)</text>
        <dbReference type="Rhea" id="RHEA:35015"/>
        <dbReference type="ChEBI" id="CHEBI:57986"/>
    </reaction>
</comment>
<comment type="activity regulation">
    <text evidence="5 13">Activity is strongly inhibited by riboflavin analogs, such as lumiflavin, flavin mononucleotide (FMN), flavin adenine dinucleotide (FAD), by methylene blue, and to a lesser extent by amiloride. Riboflavin transport is Na(+)-independent at low pH but significantly reduced by Na(+) depletion under neutral pH conditions.</text>
</comment>
<comment type="biophysicochemical properties">
    <kinetics>
        <KM evidence="5">0.98 uM for riboflavin</KM>
    </kinetics>
</comment>
<comment type="interaction">
    <interactant intactId="EBI-25845274">
        <id>Q9NQ40</id>
    </interactant>
    <interactant intactId="EBI-946046">
        <id>P54252</id>
        <label>ATXN3</label>
    </interactant>
    <organismsDiffer>false</organismsDiffer>
    <experiments>3</experiments>
</comment>
<comment type="interaction">
    <interactant intactId="EBI-25845274">
        <id>Q9NQ40</id>
    </interactant>
    <interactant intactId="EBI-10968534">
        <id>P50570-2</id>
        <label>DNM2</label>
    </interactant>
    <organismsDiffer>false</organismsDiffer>
    <experiments>3</experiments>
</comment>
<comment type="interaction">
    <interactant intactId="EBI-25845274">
        <id>Q9NQ40</id>
    </interactant>
    <interactant intactId="EBI-25847109">
        <id>O14656-2</id>
        <label>TOR1A</label>
    </interactant>
    <organismsDiffer>false</organismsDiffer>
    <experiments>3</experiments>
</comment>
<comment type="subcellular location">
    <subcellularLocation>
        <location evidence="5 8 13">Apical cell membrane</location>
        <topology evidence="5">Multi-pass membrane protein</topology>
    </subcellularLocation>
    <subcellularLocation>
        <location evidence="9 14">Cell membrane</location>
    </subcellularLocation>
</comment>
<comment type="subcellular location">
    <molecule>Isoform 1</molecule>
    <subcellularLocation>
        <location evidence="15">Cell membrane</location>
        <topology evidence="2">Multi-pass membrane protein</topology>
    </subcellularLocation>
    <subcellularLocation>
        <location evidence="15">Nucleus membrane</location>
        <topology>Multi-pass membrane protein</topology>
    </subcellularLocation>
    <subcellularLocation>
        <location evidence="15">Cytoplasm</location>
    </subcellularLocation>
</comment>
<comment type="subcellular location">
    <molecule>Isoform 2</molecule>
    <subcellularLocation>
        <location evidence="15">Cytoplasm</location>
    </subcellularLocation>
</comment>
<comment type="alternative products">
    <event type="alternative splicing"/>
    <isoform>
        <id>Q9NQ40-1</id>
        <name>1</name>
        <name evidence="18">SLC52A3a</name>
        <sequence type="displayed"/>
    </isoform>
    <isoform>
        <id>Q9NQ40-2</id>
        <name>2</name>
        <name evidence="18">SLC52A3b</name>
        <sequence type="described" ref="VSP_003814 VSP_003815"/>
    </isoform>
</comment>
<comment type="tissue specificity">
    <text evidence="5">Predominantly expressed in testis. Highly expressed in small intestine and prostate.</text>
</comment>
<comment type="disease" evidence="4 6 7 9 10 11 12 14">
    <disease id="DI-02727">
        <name>Brown-Vialetto-Van Laere syndrome 1</name>
        <acronym>BVVLS1</acronym>
        <description>A rare neurologic disorder characterized by sensorineural hearing loss and a variety of cranial nerve palsies, which develop over a relatively short period of time in a previously healthy individual. Sensorineural hearing loss may precede the neurological signs. The course is invariably progressive, but the rate of decline is variable within and between families. With disease evolution, long tract signs, lower motor neuron signs, cerebellar ataxia and lower cranial nerve (III-VI) palsies develop, giving rise to a complex picture resembling amyotrophic lateral sclerosis. Diaphragmatic weakness and respiratory compromise are some of the most distressing features, leading to recurrent chest infections and respiratory failure, which are often the cause of patients' demise.</description>
        <dbReference type="MIM" id="211530"/>
    </disease>
    <text>The disease is caused by variants affecting the gene represented in this entry.</text>
</comment>
<comment type="disease" evidence="7">
    <disease id="DI-03010">
        <name>Fazio-Londe disease</name>
        <acronym>FALOND</acronym>
        <description>A rare neurological disease characterized by progressive weakness of the muscles innervated by cranial nerves of the lower brain stem. It may present in childhood with severe neurological deterioration with hypotonia, respiratory insufficiency leading to premature death, or later in life with bulbar weakness which progresses to involve motor neurons throughout the neuroaxis. Clinical manifestations include dysarthria, dysphagia, facial weakness, tongue weakness, and fasciculations of the tongue and facial muscles.</description>
        <dbReference type="MIM" id="211500"/>
    </disease>
    <text>The disease is caused by variants affecting the gene represented in this entry.</text>
</comment>
<comment type="similarity">
    <text evidence="19">Belongs to the riboflavin transporter family.</text>
</comment>
<comment type="caution">
    <text evidence="19">It is uncertain whether Met-1 or Met-5 is the initiator.</text>
</comment>
<sequence length="469" mass="50805">MAFLMHLLVCVFGMGSWVTINGLWVELPLLVMELPEGWYLPSYLTVVIQLANIGPLLVTLLHHFRPSCLSEVPIIFTLLGVGTVTCIIFAFLWNMTSWVLDGHHSIAFLVLTFFLALVDCTSSVTFLPFMSRLPTYYLTTFFVGEGLSGLLPALVALAQGSGLTTCVNVTEISDSVPSPVPTRETDIAQGVPRALVSALPGMEAPLSHLESRYLPAHFSPLVFFLLLSIMMACCLVAFFVLQRQPRCWEASVEDLLNDQVTLHSIRPREENDLGPAGTVDSSQGQGYLEEKAAPCCPAHLAFIYTLVAFVNALTNGMLPSVQTYSCLSYGPVAYHLAATLSIVANPLASLVSMFLPNRSLLFLGVLSVLGTCFGGYNMAMAVMSPCPLLQGHWGGEVLIVASWVLFSGCLSYVKVMLGVVLRDLSRSALLWCGAAVQLGSLLGALLMFPLVNVLRLFSSADFCNLHCPA</sequence>
<organism>
    <name type="scientific">Homo sapiens</name>
    <name type="common">Human</name>
    <dbReference type="NCBI Taxonomy" id="9606"/>
    <lineage>
        <taxon>Eukaryota</taxon>
        <taxon>Metazoa</taxon>
        <taxon>Chordata</taxon>
        <taxon>Craniata</taxon>
        <taxon>Vertebrata</taxon>
        <taxon>Euteleostomi</taxon>
        <taxon>Mammalia</taxon>
        <taxon>Eutheria</taxon>
        <taxon>Euarchontoglires</taxon>
        <taxon>Primates</taxon>
        <taxon>Haplorrhini</taxon>
        <taxon>Catarrhini</taxon>
        <taxon>Hominidae</taxon>
        <taxon>Homo</taxon>
    </lineage>
</organism>
<keyword id="KW-0025">Alternative splicing</keyword>
<keyword id="KW-1003">Cell membrane</keyword>
<keyword id="KW-0963">Cytoplasm</keyword>
<keyword id="KW-0209">Deafness</keyword>
<keyword id="KW-0225">Disease variant</keyword>
<keyword id="KW-1015">Disulfide bond</keyword>
<keyword id="KW-0325">Glycoprotein</keyword>
<keyword id="KW-0472">Membrane</keyword>
<keyword id="KW-0539">Nucleus</keyword>
<keyword id="KW-0597">Phosphoprotein</keyword>
<keyword id="KW-1267">Proteomics identification</keyword>
<keyword id="KW-1185">Reference proteome</keyword>
<keyword id="KW-0812">Transmembrane</keyword>
<keyword id="KW-1133">Transmembrane helix</keyword>
<keyword id="KW-0813">Transport</keyword>
<proteinExistence type="evidence at protein level"/>
<evidence type="ECO:0000250" key="1">
    <source>
        <dbReference type="UniProtKB" id="Q4FZU9"/>
    </source>
</evidence>
<evidence type="ECO:0000255" key="2"/>
<evidence type="ECO:0000269" key="3">
    <source>
    </source>
</evidence>
<evidence type="ECO:0000269" key="4">
    <source>
    </source>
</evidence>
<evidence type="ECO:0000269" key="5">
    <source>
    </source>
</evidence>
<evidence type="ECO:0000269" key="6">
    <source>
    </source>
</evidence>
<evidence type="ECO:0000269" key="7">
    <source>
    </source>
</evidence>
<evidence type="ECO:0000269" key="8">
    <source>
    </source>
</evidence>
<evidence type="ECO:0000269" key="9">
    <source>
    </source>
</evidence>
<evidence type="ECO:0000269" key="10">
    <source>
    </source>
</evidence>
<evidence type="ECO:0000269" key="11">
    <source>
    </source>
</evidence>
<evidence type="ECO:0000269" key="12">
    <source>
    </source>
</evidence>
<evidence type="ECO:0000269" key="13">
    <source>
    </source>
</evidence>
<evidence type="ECO:0000269" key="14">
    <source>
    </source>
</evidence>
<evidence type="ECO:0000269" key="15">
    <source>
    </source>
</evidence>
<evidence type="ECO:0000303" key="16">
    <source>
    </source>
</evidence>
<evidence type="ECO:0000303" key="17">
    <source>
    </source>
</evidence>
<evidence type="ECO:0000303" key="18">
    <source>
    </source>
</evidence>
<evidence type="ECO:0000305" key="19"/>
<evidence type="ECO:0000305" key="20">
    <source>
    </source>
</evidence>
<evidence type="ECO:0000312" key="21">
    <source>
        <dbReference type="EMBL" id="AFS68799.1"/>
    </source>
</evidence>
<evidence type="ECO:0000312" key="22">
    <source>
        <dbReference type="EMBL" id="AUI80409.1"/>
    </source>
</evidence>
<evidence type="ECO:0000312" key="23">
    <source>
        <dbReference type="EMBL" id="EAX10658.1"/>
    </source>
</evidence>
<dbReference type="EMBL" id="KY978478">
    <property type="protein sequence ID" value="AUI80409.1"/>
    <property type="molecule type" value="mRNA"/>
</dbReference>
<dbReference type="EMBL" id="KY978479">
    <property type="protein sequence ID" value="AUI80410.1"/>
    <property type="molecule type" value="mRNA"/>
</dbReference>
<dbReference type="EMBL" id="JX478249">
    <property type="protein sequence ID" value="AFS68799.1"/>
    <property type="molecule type" value="mRNA"/>
</dbReference>
<dbReference type="EMBL" id="AK074650">
    <property type="protein sequence ID" value="BAC11113.1"/>
    <property type="molecule type" value="mRNA"/>
</dbReference>
<dbReference type="EMBL" id="AK291706">
    <property type="protein sequence ID" value="BAF84395.1"/>
    <property type="molecule type" value="mRNA"/>
</dbReference>
<dbReference type="EMBL" id="AL118502">
    <property type="status" value="NOT_ANNOTATED_CDS"/>
    <property type="molecule type" value="Genomic_DNA"/>
</dbReference>
<dbReference type="EMBL" id="CH471133">
    <property type="protein sequence ID" value="EAX10658.1"/>
    <property type="molecule type" value="Genomic_DNA"/>
</dbReference>
<dbReference type="EMBL" id="CH471133">
    <property type="protein sequence ID" value="EAX10659.1"/>
    <property type="molecule type" value="Genomic_DNA"/>
</dbReference>
<dbReference type="EMBL" id="BC009750">
    <property type="protein sequence ID" value="AAH09750.2"/>
    <property type="molecule type" value="mRNA"/>
</dbReference>
<dbReference type="CCDS" id="CCDS13007.1">
    <molecule id="Q9NQ40-1"/>
</dbReference>
<dbReference type="RefSeq" id="NP_001357014.1">
    <molecule id="Q9NQ40-1"/>
    <property type="nucleotide sequence ID" value="NM_001370085.1"/>
</dbReference>
<dbReference type="RefSeq" id="NP_001357015.1">
    <molecule id="Q9NQ40-1"/>
    <property type="nucleotide sequence ID" value="NM_001370086.1"/>
</dbReference>
<dbReference type="RefSeq" id="NP_212134.3">
    <molecule id="Q9NQ40-1"/>
    <property type="nucleotide sequence ID" value="NM_033409.3"/>
</dbReference>
<dbReference type="RefSeq" id="XP_005260712.1">
    <property type="nucleotide sequence ID" value="XM_005260655.3"/>
</dbReference>
<dbReference type="RefSeq" id="XP_011527450.1">
    <property type="nucleotide sequence ID" value="XM_011529148.1"/>
</dbReference>
<dbReference type="RefSeq" id="XP_024307589.1">
    <molecule id="Q9NQ40-1"/>
    <property type="nucleotide sequence ID" value="XM_024451821.1"/>
</dbReference>
<dbReference type="RefSeq" id="XP_047295823.1">
    <molecule id="Q9NQ40-1"/>
    <property type="nucleotide sequence ID" value="XM_047439867.1"/>
</dbReference>
<dbReference type="RefSeq" id="XP_047295824.1">
    <molecule id="Q9NQ40-1"/>
    <property type="nucleotide sequence ID" value="XM_047439868.1"/>
</dbReference>
<dbReference type="RefSeq" id="XP_054178894.1">
    <molecule id="Q9NQ40-1"/>
    <property type="nucleotide sequence ID" value="XM_054322919.1"/>
</dbReference>
<dbReference type="RefSeq" id="XP_054178895.1">
    <molecule id="Q9NQ40-1"/>
    <property type="nucleotide sequence ID" value="XM_054322920.1"/>
</dbReference>
<dbReference type="RefSeq" id="XP_054178896.1">
    <molecule id="Q9NQ40-1"/>
    <property type="nucleotide sequence ID" value="XM_054322921.1"/>
</dbReference>
<dbReference type="SMR" id="Q9NQ40"/>
<dbReference type="BioGRID" id="125241">
    <property type="interactions" value="2"/>
</dbReference>
<dbReference type="CORUM" id="Q9NQ40"/>
<dbReference type="FunCoup" id="Q9NQ40">
    <property type="interactions" value="547"/>
</dbReference>
<dbReference type="IntAct" id="Q9NQ40">
    <property type="interactions" value="3"/>
</dbReference>
<dbReference type="STRING" id="9606.ENSP00000494009"/>
<dbReference type="TCDB" id="2.A.125.1.2">
    <property type="family name" value="the eukaryotic riboflavin transporter (e-rft) family"/>
</dbReference>
<dbReference type="GlyCosmos" id="Q9NQ40">
    <property type="glycosylation" value="3 sites, 1 glycan"/>
</dbReference>
<dbReference type="GlyGen" id="Q9NQ40">
    <property type="glycosylation" value="8 sites, 2 O-linked glycans (2 sites)"/>
</dbReference>
<dbReference type="iPTMnet" id="Q9NQ40"/>
<dbReference type="PhosphoSitePlus" id="Q9NQ40"/>
<dbReference type="BioMuta" id="SLC52A3"/>
<dbReference type="DMDM" id="82654931"/>
<dbReference type="jPOST" id="Q9NQ40"/>
<dbReference type="MassIVE" id="Q9NQ40"/>
<dbReference type="PaxDb" id="9606-ENSP00000217254"/>
<dbReference type="PeptideAtlas" id="Q9NQ40"/>
<dbReference type="ProteomicsDB" id="82078">
    <molecule id="Q9NQ40-1"/>
</dbReference>
<dbReference type="ProteomicsDB" id="82079">
    <molecule id="Q9NQ40-2"/>
</dbReference>
<dbReference type="Antibodypedia" id="54121">
    <property type="antibodies" value="60 antibodies from 15 providers"/>
</dbReference>
<dbReference type="DNASU" id="113278"/>
<dbReference type="Ensembl" id="ENST00000217254.11">
    <molecule id="Q9NQ40-1"/>
    <property type="protein sequence ID" value="ENSP00000217254.7"/>
    <property type="gene ID" value="ENSG00000101276.18"/>
</dbReference>
<dbReference type="Ensembl" id="ENST00000381944.5">
    <molecule id="Q9NQ40-2"/>
    <property type="protein sequence ID" value="ENSP00000371370.3"/>
    <property type="gene ID" value="ENSG00000101276.18"/>
</dbReference>
<dbReference type="Ensembl" id="ENST00000488495.3">
    <molecule id="Q9NQ40-1"/>
    <property type="protein sequence ID" value="ENSP00000494009.1"/>
    <property type="gene ID" value="ENSG00000101276.18"/>
</dbReference>
<dbReference type="Ensembl" id="ENST00000645534.1">
    <molecule id="Q9NQ40-1"/>
    <property type="protein sequence ID" value="ENSP00000494193.1"/>
    <property type="gene ID" value="ENSG00000101276.18"/>
</dbReference>
<dbReference type="GeneID" id="113278"/>
<dbReference type="KEGG" id="hsa:113278"/>
<dbReference type="MANE-Select" id="ENST00000645534.1">
    <property type="protein sequence ID" value="ENSP00000494193.1"/>
    <property type="RefSeq nucleotide sequence ID" value="NM_033409.4"/>
    <property type="RefSeq protein sequence ID" value="NP_212134.3"/>
</dbReference>
<dbReference type="UCSC" id="uc002wed.5">
    <molecule id="Q9NQ40-1"/>
    <property type="organism name" value="human"/>
</dbReference>
<dbReference type="AGR" id="HGNC:16187"/>
<dbReference type="CTD" id="113278"/>
<dbReference type="DisGeNET" id="113278"/>
<dbReference type="GeneCards" id="SLC52A3"/>
<dbReference type="GeneReviews" id="SLC52A3"/>
<dbReference type="HGNC" id="HGNC:16187">
    <property type="gene designation" value="SLC52A3"/>
</dbReference>
<dbReference type="HPA" id="ENSG00000101276">
    <property type="expression patterns" value="Tissue enhanced (intestine, testis)"/>
</dbReference>
<dbReference type="MalaCards" id="SLC52A3"/>
<dbReference type="MIM" id="211500">
    <property type="type" value="phenotype"/>
</dbReference>
<dbReference type="MIM" id="211530">
    <property type="type" value="phenotype"/>
</dbReference>
<dbReference type="MIM" id="613350">
    <property type="type" value="gene"/>
</dbReference>
<dbReference type="neXtProt" id="NX_Q9NQ40"/>
<dbReference type="OpenTargets" id="ENSG00000101276"/>
<dbReference type="Orphanet" id="572550">
    <property type="disease" value="RFVT3-related riboflavin transporter deficiency"/>
</dbReference>
<dbReference type="PharmGKB" id="PA25764"/>
<dbReference type="VEuPathDB" id="HostDB:ENSG00000101276"/>
<dbReference type="eggNOG" id="KOG4255">
    <property type="taxonomic scope" value="Eukaryota"/>
</dbReference>
<dbReference type="GeneTree" id="ENSGT00390000003774"/>
<dbReference type="HOGENOM" id="CLU_034789_1_0_1"/>
<dbReference type="InParanoid" id="Q9NQ40"/>
<dbReference type="OMA" id="CGAAAQM"/>
<dbReference type="OrthoDB" id="9995836at2759"/>
<dbReference type="PAN-GO" id="Q9NQ40">
    <property type="GO annotations" value="3 GO annotations based on evolutionary models"/>
</dbReference>
<dbReference type="PhylomeDB" id="Q9NQ40"/>
<dbReference type="TreeFam" id="TF314820"/>
<dbReference type="PathwayCommons" id="Q9NQ40"/>
<dbReference type="Reactome" id="R-HSA-196843">
    <property type="pathway name" value="Vitamin B2 (riboflavin) metabolism"/>
</dbReference>
<dbReference type="SignaLink" id="Q9NQ40"/>
<dbReference type="BioGRID-ORCS" id="113278">
    <property type="hits" value="13 hits in 1149 CRISPR screens"/>
</dbReference>
<dbReference type="ChiTaRS" id="SLC52A3">
    <property type="organism name" value="human"/>
</dbReference>
<dbReference type="GeneWiki" id="C20orf54"/>
<dbReference type="GenomeRNAi" id="113278"/>
<dbReference type="Pharos" id="Q9NQ40">
    <property type="development level" value="Tbio"/>
</dbReference>
<dbReference type="PRO" id="PR:Q9NQ40"/>
<dbReference type="Proteomes" id="UP000005640">
    <property type="component" value="Chromosome 20"/>
</dbReference>
<dbReference type="RNAct" id="Q9NQ40">
    <property type="molecule type" value="protein"/>
</dbReference>
<dbReference type="Bgee" id="ENSG00000101276">
    <property type="expression patterns" value="Expressed in right testis and 119 other cell types or tissues"/>
</dbReference>
<dbReference type="ExpressionAtlas" id="Q9NQ40">
    <property type="expression patterns" value="baseline and differential"/>
</dbReference>
<dbReference type="GO" id="GO:0016324">
    <property type="term" value="C:apical plasma membrane"/>
    <property type="evidence" value="ECO:0007669"/>
    <property type="project" value="UniProtKB-SubCell"/>
</dbReference>
<dbReference type="GO" id="GO:0005737">
    <property type="term" value="C:cytoplasm"/>
    <property type="evidence" value="ECO:0000314"/>
    <property type="project" value="UniProtKB"/>
</dbReference>
<dbReference type="GO" id="GO:0031965">
    <property type="term" value="C:nuclear membrane"/>
    <property type="evidence" value="ECO:0007669"/>
    <property type="project" value="UniProtKB-SubCell"/>
</dbReference>
<dbReference type="GO" id="GO:0005634">
    <property type="term" value="C:nucleus"/>
    <property type="evidence" value="ECO:0000314"/>
    <property type="project" value="UniProtKB"/>
</dbReference>
<dbReference type="GO" id="GO:0005886">
    <property type="term" value="C:plasma membrane"/>
    <property type="evidence" value="ECO:0000314"/>
    <property type="project" value="UniProtKB"/>
</dbReference>
<dbReference type="GO" id="GO:0032217">
    <property type="term" value="F:riboflavin transmembrane transporter activity"/>
    <property type="evidence" value="ECO:0000314"/>
    <property type="project" value="UniProtKB"/>
</dbReference>
<dbReference type="GO" id="GO:0034605">
    <property type="term" value="P:cellular response to heat"/>
    <property type="evidence" value="ECO:0007669"/>
    <property type="project" value="Ensembl"/>
</dbReference>
<dbReference type="GO" id="GO:0072388">
    <property type="term" value="P:flavin adenine dinucleotide biosynthetic process"/>
    <property type="evidence" value="ECO:0007669"/>
    <property type="project" value="Ensembl"/>
</dbReference>
<dbReference type="GO" id="GO:0006771">
    <property type="term" value="P:riboflavin metabolic process"/>
    <property type="evidence" value="ECO:0000304"/>
    <property type="project" value="Reactome"/>
</dbReference>
<dbReference type="GO" id="GO:0032218">
    <property type="term" value="P:riboflavin transport"/>
    <property type="evidence" value="ECO:0000314"/>
    <property type="project" value="UniProtKB"/>
</dbReference>
<dbReference type="GO" id="GO:0007605">
    <property type="term" value="P:sensory perception of sound"/>
    <property type="evidence" value="ECO:0000315"/>
    <property type="project" value="UniProtKB"/>
</dbReference>
<dbReference type="InterPro" id="IPR009357">
    <property type="entry name" value="Riboflavin_transptr"/>
</dbReference>
<dbReference type="PANTHER" id="PTHR12929">
    <property type="entry name" value="SOLUTE CARRIER FAMILY 52"/>
    <property type="match status" value="1"/>
</dbReference>
<dbReference type="PANTHER" id="PTHR12929:SF4">
    <property type="entry name" value="SOLUTE CARRIER FAMILY 52, RIBOFLAVIN TRANSPORTER, MEMBER 3"/>
    <property type="match status" value="1"/>
</dbReference>
<dbReference type="Pfam" id="PF06237">
    <property type="entry name" value="SLC52_ribofla_tr"/>
    <property type="match status" value="1"/>
</dbReference>
<reference evidence="22" key="1">
    <citation type="journal article" date="2018" name="Cell. Mol. Life Sci.">
        <title>SLC52A3 expression is activated by NF-kappaB p65/Rel-B and serves as a prognostic biomarker in esophageal cancer.</title>
        <authorList>
            <person name="Long L."/>
            <person name="Pang X.X."/>
            <person name="Lei F."/>
            <person name="Zhang J.S."/>
            <person name="Wang W."/>
            <person name="Liao L.D."/>
            <person name="Xu X.E."/>
            <person name="He J.Z."/>
            <person name="Wu J.Y."/>
            <person name="Wu Z.Y."/>
            <person name="Wang L.D."/>
            <person name="Lin D.C."/>
            <person name="Li E.M."/>
            <person name="Xu L.Y."/>
        </authorList>
    </citation>
    <scope>NUCLEOTIDE SEQUENCE [MRNA] (ISOFORMS 1 AND 2)</scope>
    <scope>SUBCELLULAR LOCATION (ISOFORMS 1 AND 2)</scope>
</reference>
<reference evidence="21" key="2">
    <citation type="submission" date="2012-08" db="EMBL/GenBank/DDBJ databases">
        <title>Clone and bioinformatics analysis on the coding region of c20orf54 gene.</title>
        <authorList>
            <person name="Huang Z.G."/>
            <person name="Hong Q.N."/>
            <person name="Lun J.X."/>
            <person name="Lin W."/>
            <person name="Yang W."/>
            <person name="Deng Q.L."/>
            <person name="He Z."/>
            <person name="Lai Y.X."/>
            <person name="Xing J.M."/>
            <person name="Liu Y.Q."/>
        </authorList>
    </citation>
    <scope>NUCLEOTIDE SEQUENCE [MRNA] (ISOFORM 1)</scope>
</reference>
<reference key="3">
    <citation type="journal article" date="2004" name="Nat. Genet.">
        <title>Complete sequencing and characterization of 21,243 full-length human cDNAs.</title>
        <authorList>
            <person name="Ota T."/>
            <person name="Suzuki Y."/>
            <person name="Nishikawa T."/>
            <person name="Otsuki T."/>
            <person name="Sugiyama T."/>
            <person name="Irie R."/>
            <person name="Wakamatsu A."/>
            <person name="Hayashi K."/>
            <person name="Sato H."/>
            <person name="Nagai K."/>
            <person name="Kimura K."/>
            <person name="Makita H."/>
            <person name="Sekine M."/>
            <person name="Obayashi M."/>
            <person name="Nishi T."/>
            <person name="Shibahara T."/>
            <person name="Tanaka T."/>
            <person name="Ishii S."/>
            <person name="Yamamoto J."/>
            <person name="Saito K."/>
            <person name="Kawai Y."/>
            <person name="Isono Y."/>
            <person name="Nakamura Y."/>
            <person name="Nagahari K."/>
            <person name="Murakami K."/>
            <person name="Yasuda T."/>
            <person name="Iwayanagi T."/>
            <person name="Wagatsuma M."/>
            <person name="Shiratori A."/>
            <person name="Sudo H."/>
            <person name="Hosoiri T."/>
            <person name="Kaku Y."/>
            <person name="Kodaira H."/>
            <person name="Kondo H."/>
            <person name="Sugawara M."/>
            <person name="Takahashi M."/>
            <person name="Kanda K."/>
            <person name="Yokoi T."/>
            <person name="Furuya T."/>
            <person name="Kikkawa E."/>
            <person name="Omura Y."/>
            <person name="Abe K."/>
            <person name="Kamihara K."/>
            <person name="Katsuta N."/>
            <person name="Sato K."/>
            <person name="Tanikawa M."/>
            <person name="Yamazaki M."/>
            <person name="Ninomiya K."/>
            <person name="Ishibashi T."/>
            <person name="Yamashita H."/>
            <person name="Murakawa K."/>
            <person name="Fujimori K."/>
            <person name="Tanai H."/>
            <person name="Kimata M."/>
            <person name="Watanabe M."/>
            <person name="Hiraoka S."/>
            <person name="Chiba Y."/>
            <person name="Ishida S."/>
            <person name="Ono Y."/>
            <person name="Takiguchi S."/>
            <person name="Watanabe S."/>
            <person name="Yosida M."/>
            <person name="Hotuta T."/>
            <person name="Kusano J."/>
            <person name="Kanehori K."/>
            <person name="Takahashi-Fujii A."/>
            <person name="Hara H."/>
            <person name="Tanase T.-O."/>
            <person name="Nomura Y."/>
            <person name="Togiya S."/>
            <person name="Komai F."/>
            <person name="Hara R."/>
            <person name="Takeuchi K."/>
            <person name="Arita M."/>
            <person name="Imose N."/>
            <person name="Musashino K."/>
            <person name="Yuuki H."/>
            <person name="Oshima A."/>
            <person name="Sasaki N."/>
            <person name="Aotsuka S."/>
            <person name="Yoshikawa Y."/>
            <person name="Matsunawa H."/>
            <person name="Ichihara T."/>
            <person name="Shiohata N."/>
            <person name="Sano S."/>
            <person name="Moriya S."/>
            <person name="Momiyama H."/>
            <person name="Satoh N."/>
            <person name="Takami S."/>
            <person name="Terashima Y."/>
            <person name="Suzuki O."/>
            <person name="Nakagawa S."/>
            <person name="Senoh A."/>
            <person name="Mizoguchi H."/>
            <person name="Goto Y."/>
            <person name="Shimizu F."/>
            <person name="Wakebe H."/>
            <person name="Hishigaki H."/>
            <person name="Watanabe T."/>
            <person name="Sugiyama A."/>
            <person name="Takemoto M."/>
            <person name="Kawakami B."/>
            <person name="Yamazaki M."/>
            <person name="Watanabe K."/>
            <person name="Kumagai A."/>
            <person name="Itakura S."/>
            <person name="Fukuzumi Y."/>
            <person name="Fujimori Y."/>
            <person name="Komiyama M."/>
            <person name="Tashiro H."/>
            <person name="Tanigami A."/>
            <person name="Fujiwara T."/>
            <person name="Ono T."/>
            <person name="Yamada K."/>
            <person name="Fujii Y."/>
            <person name="Ozaki K."/>
            <person name="Hirao M."/>
            <person name="Ohmori Y."/>
            <person name="Kawabata A."/>
            <person name="Hikiji T."/>
            <person name="Kobatake N."/>
            <person name="Inagaki H."/>
            <person name="Ikema Y."/>
            <person name="Okamoto S."/>
            <person name="Okitani R."/>
            <person name="Kawakami T."/>
            <person name="Noguchi S."/>
            <person name="Itoh T."/>
            <person name="Shigeta K."/>
            <person name="Senba T."/>
            <person name="Matsumura K."/>
            <person name="Nakajima Y."/>
            <person name="Mizuno T."/>
            <person name="Morinaga M."/>
            <person name="Sasaki M."/>
            <person name="Togashi T."/>
            <person name="Oyama M."/>
            <person name="Hata H."/>
            <person name="Watanabe M."/>
            <person name="Komatsu T."/>
            <person name="Mizushima-Sugano J."/>
            <person name="Satoh T."/>
            <person name="Shirai Y."/>
            <person name="Takahashi Y."/>
            <person name="Nakagawa K."/>
            <person name="Okumura K."/>
            <person name="Nagase T."/>
            <person name="Nomura N."/>
            <person name="Kikuchi H."/>
            <person name="Masuho Y."/>
            <person name="Yamashita R."/>
            <person name="Nakai K."/>
            <person name="Yada T."/>
            <person name="Nakamura Y."/>
            <person name="Ohara O."/>
            <person name="Isogai T."/>
            <person name="Sugano S."/>
        </authorList>
    </citation>
    <scope>NUCLEOTIDE SEQUENCE [LARGE SCALE MRNA] (ISOFORM 2)</scope>
    <source>
        <tissue>Mammary gland</tissue>
        <tissue>Placenta</tissue>
    </source>
</reference>
<reference key="4">
    <citation type="journal article" date="2001" name="Nature">
        <title>The DNA sequence and comparative analysis of human chromosome 20.</title>
        <authorList>
            <person name="Deloukas P."/>
            <person name="Matthews L.H."/>
            <person name="Ashurst J.L."/>
            <person name="Burton J."/>
            <person name="Gilbert J.G.R."/>
            <person name="Jones M."/>
            <person name="Stavrides G."/>
            <person name="Almeida J.P."/>
            <person name="Babbage A.K."/>
            <person name="Bagguley C.L."/>
            <person name="Bailey J."/>
            <person name="Barlow K.F."/>
            <person name="Bates K.N."/>
            <person name="Beard L.M."/>
            <person name="Beare D.M."/>
            <person name="Beasley O.P."/>
            <person name="Bird C.P."/>
            <person name="Blakey S.E."/>
            <person name="Bridgeman A.M."/>
            <person name="Brown A.J."/>
            <person name="Buck D."/>
            <person name="Burrill W.D."/>
            <person name="Butler A.P."/>
            <person name="Carder C."/>
            <person name="Carter N.P."/>
            <person name="Chapman J.C."/>
            <person name="Clamp M."/>
            <person name="Clark G."/>
            <person name="Clark L.N."/>
            <person name="Clark S.Y."/>
            <person name="Clee C.M."/>
            <person name="Clegg S."/>
            <person name="Cobley V.E."/>
            <person name="Collier R.E."/>
            <person name="Connor R.E."/>
            <person name="Corby N.R."/>
            <person name="Coulson A."/>
            <person name="Coville G.J."/>
            <person name="Deadman R."/>
            <person name="Dhami P.D."/>
            <person name="Dunn M."/>
            <person name="Ellington A.G."/>
            <person name="Frankland J.A."/>
            <person name="Fraser A."/>
            <person name="French L."/>
            <person name="Garner P."/>
            <person name="Grafham D.V."/>
            <person name="Griffiths C."/>
            <person name="Griffiths M.N.D."/>
            <person name="Gwilliam R."/>
            <person name="Hall R.E."/>
            <person name="Hammond S."/>
            <person name="Harley J.L."/>
            <person name="Heath P.D."/>
            <person name="Ho S."/>
            <person name="Holden J.L."/>
            <person name="Howden P.J."/>
            <person name="Huckle E."/>
            <person name="Hunt A.R."/>
            <person name="Hunt S.E."/>
            <person name="Jekosch K."/>
            <person name="Johnson C.M."/>
            <person name="Johnson D."/>
            <person name="Kay M.P."/>
            <person name="Kimberley A.M."/>
            <person name="King A."/>
            <person name="Knights A."/>
            <person name="Laird G.K."/>
            <person name="Lawlor S."/>
            <person name="Lehvaeslaiho M.H."/>
            <person name="Leversha M.A."/>
            <person name="Lloyd C."/>
            <person name="Lloyd D.M."/>
            <person name="Lovell J.D."/>
            <person name="Marsh V.L."/>
            <person name="Martin S.L."/>
            <person name="McConnachie L.J."/>
            <person name="McLay K."/>
            <person name="McMurray A.A."/>
            <person name="Milne S.A."/>
            <person name="Mistry D."/>
            <person name="Moore M.J.F."/>
            <person name="Mullikin J.C."/>
            <person name="Nickerson T."/>
            <person name="Oliver K."/>
            <person name="Parker A."/>
            <person name="Patel R."/>
            <person name="Pearce T.A.V."/>
            <person name="Peck A.I."/>
            <person name="Phillimore B.J.C.T."/>
            <person name="Prathalingam S.R."/>
            <person name="Plumb R.W."/>
            <person name="Ramsay H."/>
            <person name="Rice C.M."/>
            <person name="Ross M.T."/>
            <person name="Scott C.E."/>
            <person name="Sehra H.K."/>
            <person name="Shownkeen R."/>
            <person name="Sims S."/>
            <person name="Skuce C.D."/>
            <person name="Smith M.L."/>
            <person name="Soderlund C."/>
            <person name="Steward C.A."/>
            <person name="Sulston J.E."/>
            <person name="Swann R.M."/>
            <person name="Sycamore N."/>
            <person name="Taylor R."/>
            <person name="Tee L."/>
            <person name="Thomas D.W."/>
            <person name="Thorpe A."/>
            <person name="Tracey A."/>
            <person name="Tromans A.C."/>
            <person name="Vaudin M."/>
            <person name="Wall M."/>
            <person name="Wallis J.M."/>
            <person name="Whitehead S.L."/>
            <person name="Whittaker P."/>
            <person name="Willey D.L."/>
            <person name="Williams L."/>
            <person name="Williams S.A."/>
            <person name="Wilming L."/>
            <person name="Wray P.W."/>
            <person name="Hubbard T."/>
            <person name="Durbin R.M."/>
            <person name="Bentley D.R."/>
            <person name="Beck S."/>
            <person name="Rogers J."/>
        </authorList>
    </citation>
    <scope>NUCLEOTIDE SEQUENCE [LARGE SCALE GENOMIC DNA]</scope>
</reference>
<reference evidence="23" key="5">
    <citation type="submission" date="2005-09" db="EMBL/GenBank/DDBJ databases">
        <authorList>
            <person name="Mural R.J."/>
            <person name="Istrail S."/>
            <person name="Sutton G.G."/>
            <person name="Florea L."/>
            <person name="Halpern A.L."/>
            <person name="Mobarry C.M."/>
            <person name="Lippert R."/>
            <person name="Walenz B."/>
            <person name="Shatkay H."/>
            <person name="Dew I."/>
            <person name="Miller J.R."/>
            <person name="Flanigan M.J."/>
            <person name="Edwards N.J."/>
            <person name="Bolanos R."/>
            <person name="Fasulo D."/>
            <person name="Halldorsson B.V."/>
            <person name="Hannenhalli S."/>
            <person name="Turner R."/>
            <person name="Yooseph S."/>
            <person name="Lu F."/>
            <person name="Nusskern D.R."/>
            <person name="Shue B.C."/>
            <person name="Zheng X.H."/>
            <person name="Zhong F."/>
            <person name="Delcher A.L."/>
            <person name="Huson D.H."/>
            <person name="Kravitz S.A."/>
            <person name="Mouchard L."/>
            <person name="Reinert K."/>
            <person name="Remington K.A."/>
            <person name="Clark A.G."/>
            <person name="Waterman M.S."/>
            <person name="Eichler E.E."/>
            <person name="Adams M.D."/>
            <person name="Hunkapiller M.W."/>
            <person name="Myers E.W."/>
            <person name="Venter J.C."/>
        </authorList>
    </citation>
    <scope>NUCLEOTIDE SEQUENCE [LARGE SCALE GENOMIC DNA]</scope>
</reference>
<reference key="6">
    <citation type="journal article" date="2004" name="Genome Res.">
        <title>The status, quality, and expansion of the NIH full-length cDNA project: the Mammalian Gene Collection (MGC).</title>
        <authorList>
            <consortium name="The MGC Project Team"/>
        </authorList>
    </citation>
    <scope>NUCLEOTIDE SEQUENCE [LARGE SCALE MRNA] (ISOFORM 1)</scope>
    <scope>VARIANTS LEU-267; MET-278 AND VAL-303</scope>
    <source>
        <tissue>Pancreas</tissue>
    </source>
</reference>
<reference key="7">
    <citation type="journal article" date="2009" name="J. Biochem.">
        <title>Identification and functional characterization of rat riboflavin transporter 2.</title>
        <authorList>
            <person name="Yamamoto S."/>
            <person name="Inoue K."/>
            <person name="Ohta K.Y."/>
            <person name="Fukatsu R."/>
            <person name="Maeda J.Y."/>
            <person name="Yoshida Y."/>
            <person name="Yuasa H."/>
        </authorList>
    </citation>
    <scope>IDENTIFICATION</scope>
</reference>
<reference key="8">
    <citation type="journal article" date="2010" name="J. Nutr.">
        <title>Identification and comparative functional characterization of a new human riboflavin transporter hRFT3 expressed in the brain.</title>
        <authorList>
            <person name="Yao Y."/>
            <person name="Yonezawa A."/>
            <person name="Yoshimatsu H."/>
            <person name="Masuda S."/>
            <person name="Katsura T."/>
            <person name="Inui K."/>
        </authorList>
    </citation>
    <scope>FUNCTION</scope>
    <scope>TRANSPORTER ACTIVITY</scope>
    <scope>ACTIVITY REGULATION</scope>
    <scope>BIOPHYSICOCHEMICAL PROPERTIES</scope>
    <scope>SUBCELLULAR LOCATION</scope>
    <scope>TISSUE SPECIFICITY</scope>
</reference>
<reference key="9">
    <citation type="journal article" date="2011" name="Am. J. Physiol.">
        <title>Role of cysteine residues in cell surface expression of the human riboflavin transporter-2 (hRFT2) in intestinal epithelial cells.</title>
        <authorList>
            <person name="Subramanian V.S."/>
            <person name="Rapp L."/>
            <person name="Marchant J.S."/>
            <person name="Said H.M."/>
        </authorList>
    </citation>
    <scope>SUBCELLULAR LOCATION</scope>
    <scope>TOPOLOGY</scope>
    <scope>DISULFIDE BOND</scope>
    <scope>MUTAGENESIS OF CYS-326; CYS-386; ARG-455; CYS-463 AND CYS-467</scope>
</reference>
<reference key="10">
    <citation type="journal article" date="2011" name="J. Inherit. Metab. Dis.">
        <title>Brown-Vialetto-Van Laere and Fazio Londe syndrome is associated with a riboflavin transporter defect mimicking mild MADD: a new inborn error of metabolism with potential treatment.</title>
        <authorList>
            <person name="Bosch A.M."/>
            <person name="Abeling N.G."/>
            <person name="Ijlst L."/>
            <person name="Knoester H."/>
            <person name="van der Pol W.L."/>
            <person name="Stroomer A.E."/>
            <person name="Wanders R.J."/>
            <person name="Visser G."/>
            <person name="Wijburg F.A."/>
            <person name="Duran M."/>
            <person name="Waterham H.R."/>
        </authorList>
    </citation>
    <scope>INVOLVEMENT IN FALOND</scope>
    <scope>INVOLVEMENT IN BVVLS1</scope>
    <scope>VARIANT BVVLS1 ARG-17</scope>
</reference>
<reference key="11">
    <citation type="journal article" date="2014" name="Am. J. Physiol.">
        <title>Functional involvement of RFVT3/SLC52A3 in intestinal riboflavin absorption.</title>
        <authorList>
            <person name="Yoshimatsu H."/>
            <person name="Yonezawa A."/>
            <person name="Yao Y."/>
            <person name="Sugano K."/>
            <person name="Nakagawa S."/>
            <person name="Omura T."/>
            <person name="Matsubara K."/>
        </authorList>
    </citation>
    <scope>FUNCTION</scope>
    <scope>TRANSPORTER ACTIVITY</scope>
    <scope>ACTIVITY REGULATION</scope>
    <scope>SUBCELLULAR LOCATION</scope>
</reference>
<reference key="12">
    <citation type="journal article" date="2010" name="Am. J. Hum. Genet.">
        <title>Brown-Vialetto-Van Laere syndrome, a ponto-bulbar palsy with deafness, is caused by mutations in c20orf54.</title>
        <authorList>
            <person name="Green P."/>
            <person name="Wiseman M."/>
            <person name="Crow Y.J."/>
            <person name="Houlden H."/>
            <person name="Riphagen S."/>
            <person name="Lin J.P."/>
            <person name="Raymond F.L."/>
            <person name="Childs A.M."/>
            <person name="Sheridan E."/>
            <person name="Edwards S."/>
            <person name="Josifova D.J."/>
        </authorList>
    </citation>
    <scope>VARIANTS BVVLS1 LYS-36; TRP-132; LEU-224; ALA-413 AND LEU-457</scope>
    <scope>VARIANT MET-350</scope>
</reference>
<reference key="13">
    <citation type="journal article" date="2010" name="Am. J. Hum. Genet.">
        <title>Exome sequencing in Brown-Vialetto-van Laere syndrome.</title>
        <authorList>
            <person name="Johnson J.O."/>
            <person name="Gibbs J.R."/>
            <person name="Van Maldergem L."/>
            <person name="Houlden H."/>
            <person name="Singleton A.B."/>
        </authorList>
    </citation>
    <scope>VARIANTS BVVLS1 THR-28 AND LYS-71</scope>
</reference>
<reference key="14">
    <citation type="journal article" date="2012" name="J. Hum. Genet.">
        <title>Four novel C20orf54 mutations identified in Brown-Vialetto-Van Laere syndrome patients.</title>
        <authorList>
            <person name="Dezfouli M.A."/>
            <person name="Yadegari S."/>
            <person name="Nafissi S."/>
            <person name="Elahi E."/>
        </authorList>
    </citation>
    <scope>VARIANTS BVVLS1 SER-21; HIS-220; VAL-312 AND ASP-375</scope>
</reference>
<reference key="15">
    <citation type="journal article" date="2012" name="Mol. Genet. Metab.">
        <title>Effect of clinical mutations on functionality of the human riboflavin transporter-2 (hRFT-2).</title>
        <authorList>
            <person name="Nabokina S.M."/>
            <person name="Subramanian V.S."/>
            <person name="Said H.M."/>
        </authorList>
    </citation>
    <scope>CHARACTERIZATION OF VARIANTS BVVLS1 ARG-17; THR-28; LYS-36; LYS-71 AND TRP-132</scope>
    <scope>CHARACTERIZATION OF VARIANT MET-350</scope>
    <scope>FUNCTION</scope>
    <scope>TRANSPORTER ACTIVITY</scope>
    <scope>SUBCELLULAR LOCATION</scope>
</reference>
<reference key="16">
    <citation type="journal article" date="2012" name="Neuromuscul. Disord.">
        <title>Brown-Vialetto-van Laere and Fazio-Londe overlap syndromes: a clinical, biochemical and genetic study.</title>
        <authorList>
            <person name="Ciccolella M."/>
            <person name="Catteruccia M."/>
            <person name="Benedetti S."/>
            <person name="Moroni I."/>
            <person name="Uziel G."/>
            <person name="Pantaleoni C."/>
            <person name="Chiapparini L."/>
            <person name="Bizzi A."/>
            <person name="D'Amico A."/>
            <person name="Fattori F."/>
            <person name="Salsano M.L."/>
            <person name="Pastore A."/>
            <person name="Tozzi G."/>
            <person name="Piemonte F."/>
            <person name="Bertini E."/>
        </authorList>
    </citation>
    <scope>VARIANTS BVVLS1 ASP-58; TRP-266; SER-319 AND ALA-413</scope>
    <scope>VARIANT VAL-303</scope>
</reference>
<reference key="17">
    <citation type="journal article" date="2012" name="Pediatr. Neurol.">
        <title>Brown-Vialetto-Van Laere syndrome: a riboflavin-unresponsive patient with a novel mutation in the C20orf54 gene.</title>
        <authorList>
            <person name="Koy A."/>
            <person name="Pillekamp F."/>
            <person name="Hoehn T."/>
            <person name="Waterham H."/>
            <person name="Klee D."/>
            <person name="Mayatepek E."/>
            <person name="Assmann B."/>
        </authorList>
    </citation>
    <scope>VARIANT BVVLS1 VAL-330</scope>
</reference>
<reference key="18">
    <citation type="journal article" date="2016" name="Clin. Chim. Acta">
        <title>SLC52A2 [p.P141T] and SLC52A3 [p.N21S] causing Brown-Vialetto-Van Laere syndrome in an Indian patient: First genetically proven case with mutations in two riboflavin transporters.</title>
        <authorList>
            <person name="Udhayabanu T."/>
            <person name="Subramanian V.S."/>
            <person name="Teafatiller T."/>
            <person name="Gowda V.K."/>
            <person name="Raghavan V.S."/>
            <person name="Varalakshmi P."/>
            <person name="Said H.M."/>
            <person name="Ashokkumar B."/>
        </authorList>
    </citation>
    <scope>VARIANT BVVLS1 SER-21</scope>
    <scope>CHARACTERIZATION OF VARIANT BVVLS1 SER-21</scope>
    <scope>FUNCTION</scope>
    <scope>TRANSPORTER ACTIVITY</scope>
    <scope>SUBCELLULAR LOCATION</scope>
</reference>
<name>S52A3_HUMAN</name>
<protein>
    <recommendedName>
        <fullName>Solute carrier family 52, riboflavin transporter, member 3</fullName>
    </recommendedName>
    <alternativeName>
        <fullName>Riboflavin transporter 2</fullName>
        <shortName>hRFT2</shortName>
    </alternativeName>
</protein>
<feature type="chain" id="PRO_0000042636" description="Solute carrier family 52, riboflavin transporter, member 3">
    <location>
        <begin position="1"/>
        <end position="469"/>
    </location>
</feature>
<feature type="topological domain" description="Cytoplasmic" evidence="2">
    <location>
        <begin position="1"/>
        <end position="2"/>
    </location>
</feature>
<feature type="transmembrane region" description="Helical" evidence="2">
    <location>
        <begin position="3"/>
        <end position="23"/>
    </location>
</feature>
<feature type="topological domain" description="Extracellular" evidence="2">
    <location>
        <begin position="24"/>
        <end position="43"/>
    </location>
</feature>
<feature type="transmembrane region" description="Helical" evidence="2">
    <location>
        <begin position="44"/>
        <end position="64"/>
    </location>
</feature>
<feature type="topological domain" description="Cytoplasmic" evidence="2">
    <location>
        <begin position="65"/>
        <end position="71"/>
    </location>
</feature>
<feature type="transmembrane region" description="Helical" evidence="2">
    <location>
        <begin position="72"/>
        <end position="92"/>
    </location>
</feature>
<feature type="topological domain" description="Extracellular" evidence="2">
    <location>
        <begin position="93"/>
        <end position="97"/>
    </location>
</feature>
<feature type="transmembrane region" description="Helical" evidence="2">
    <location>
        <begin position="98"/>
        <end position="118"/>
    </location>
</feature>
<feature type="topological domain" description="Cytoplasmic" evidence="2">
    <location>
        <begin position="119"/>
        <end position="137"/>
    </location>
</feature>
<feature type="transmembrane region" description="Helical" evidence="2">
    <location>
        <begin position="138"/>
        <end position="158"/>
    </location>
</feature>
<feature type="topological domain" description="Extracellular" evidence="2">
    <location>
        <begin position="159"/>
        <end position="220"/>
    </location>
</feature>
<feature type="transmembrane region" description="Helical" evidence="2">
    <location>
        <begin position="221"/>
        <end position="241"/>
    </location>
</feature>
<feature type="topological domain" description="Cytoplasmic" evidence="2">
    <location>
        <begin position="242"/>
        <end position="292"/>
    </location>
</feature>
<feature type="transmembrane region" description="Helical" evidence="2">
    <location>
        <begin position="293"/>
        <end position="313"/>
    </location>
</feature>
<feature type="topological domain" description="Extracellular" evidence="2">
    <location>
        <begin position="314"/>
        <end position="335"/>
    </location>
</feature>
<feature type="transmembrane region" description="Helical" evidence="2">
    <location>
        <begin position="336"/>
        <end position="356"/>
    </location>
</feature>
<feature type="topological domain" description="Cytoplasmic" evidence="2">
    <location>
        <begin position="357"/>
        <end position="359"/>
    </location>
</feature>
<feature type="transmembrane region" description="Helical" evidence="2">
    <location>
        <begin position="360"/>
        <end position="380"/>
    </location>
</feature>
<feature type="topological domain" description="Extracellular" evidence="2">
    <location>
        <begin position="381"/>
        <end position="396"/>
    </location>
</feature>
<feature type="transmembrane region" description="Helical" evidence="2">
    <location>
        <begin position="397"/>
        <end position="417"/>
    </location>
</feature>
<feature type="topological domain" description="Cytoplasmic" evidence="2">
    <location>
        <begin position="418"/>
        <end position="427"/>
    </location>
</feature>
<feature type="transmembrane region" description="Helical" evidence="2">
    <location>
        <begin position="428"/>
        <end position="448"/>
    </location>
</feature>
<feature type="topological domain" description="Extracellular" evidence="2">
    <location>
        <begin position="449"/>
        <end position="469"/>
    </location>
</feature>
<feature type="modified residue" description="Phosphoserine" evidence="1">
    <location>
        <position position="251"/>
    </location>
</feature>
<feature type="glycosylation site" description="N-linked (GlcNAc...) asparagine" evidence="2">
    <location>
        <position position="94"/>
    </location>
</feature>
<feature type="glycosylation site" description="N-linked (GlcNAc...) asparagine" evidence="2">
    <location>
        <position position="168"/>
    </location>
</feature>
<feature type="disulfide bond" evidence="20">
    <location>
        <begin position="386"/>
        <end position="463"/>
    </location>
</feature>
<feature type="splice variant" id="VSP_003814" description="In isoform 2." evidence="15 16">
    <original>ASWVLFSGCLSYVKV</original>
    <variation>SIRPVGLLPLRTPHP</variation>
    <location>
        <begin position="401"/>
        <end position="415"/>
    </location>
</feature>
<feature type="splice variant" id="VSP_003815" description="In isoform 2." evidence="15 16">
    <location>
        <begin position="416"/>
        <end position="469"/>
    </location>
</feature>
<feature type="sequence variant" id="VAR_077422" description="In BVVLS1; loss of riboflavin transport; no effect on localization to cell membrane; does not affect protein abundance; dbSNP:rs797045190." evidence="7 9">
    <original>W</original>
    <variation>R</variation>
    <location>
        <position position="17"/>
    </location>
</feature>
<feature type="sequence variant" id="VAR_077423" description="In BVVLS1; loss of localization to cell membrane; loss of riboflavin transport; dbSNP:rs199588390." evidence="11 14">
    <original>N</original>
    <variation>S</variation>
    <location>
        <position position="21"/>
    </location>
</feature>
<feature type="sequence variant" id="VAR_077424" description="In BVVLS1; loss of localization to cell membrane; loss of riboflavin transport; does not affect protein abundance; dbSNP:rs267606688." evidence="6 9">
    <original>P</original>
    <variation>T</variation>
    <location>
        <position position="28"/>
    </location>
</feature>
<feature type="sequence variant" id="VAR_063694" description="In BVVLS1; loss of localization to cell membrane; loss of riboflavin transport; does not affect protein abundance; dbSNP:rs267606686." evidence="4 9">
    <original>E</original>
    <variation>K</variation>
    <location>
        <position position="36"/>
    </location>
</feature>
<feature type="sequence variant" id="VAR_077425" description="In BVVLS1; dbSNP:rs797045192." evidence="12">
    <original>V</original>
    <variation>D</variation>
    <location>
        <position position="58"/>
    </location>
</feature>
<feature type="sequence variant" id="VAR_077426" description="In BVVLS1; loss of localization to cell membrane; loss of riboflavin transport; does not affect protein abundance; dbSNP:rs267606683." evidence="6 9">
    <original>E</original>
    <variation>K</variation>
    <location>
        <position position="71"/>
    </location>
</feature>
<feature type="sequence variant" id="VAR_053565" description="In dbSNP:rs35655964.">
    <original>I</original>
    <variation>M</variation>
    <location>
        <position position="74"/>
    </location>
</feature>
<feature type="sequence variant" id="VAR_063695" description="In BVVLS1; loss of localization to cell membrane; loss of riboflavin transport; does not affect protein abundance; dbSNP:rs267606684." evidence="4 9">
    <original>R</original>
    <variation>W</variation>
    <location>
        <position position="132"/>
    </location>
</feature>
<feature type="sequence variant" id="VAR_053566" description="In dbSNP:rs6054614.">
    <original>D</original>
    <variation>G</variation>
    <location>
        <position position="174"/>
    </location>
</feature>
<feature type="sequence variant" id="VAR_077427" description="In BVVLS1; uncertain significance; dbSNP:rs797045194." evidence="11">
    <original>P</original>
    <variation>H</variation>
    <location>
        <position position="220"/>
    </location>
</feature>
<feature type="sequence variant" id="VAR_063696" description="In BVVLS1; dbSNP:rs267606685." evidence="4">
    <original>F</original>
    <variation>L</variation>
    <location>
        <position position="224"/>
    </location>
</feature>
<feature type="sequence variant" id="VAR_077428" description="In BVVLS1; uncertain significance; dbSNP:rs370499474." evidence="12">
    <original>R</original>
    <variation>W</variation>
    <location>
        <position position="266"/>
    </location>
</feature>
<feature type="sequence variant" id="VAR_053567" description="In dbSNP:rs3746804." evidence="3">
    <original>P</original>
    <variation>L</variation>
    <location>
        <position position="267"/>
    </location>
</feature>
<feature type="sequence variant" id="VAR_053568" description="In dbSNP:rs3746803." evidence="3">
    <original>T</original>
    <variation>M</variation>
    <location>
        <position position="278"/>
    </location>
</feature>
<feature type="sequence variant" id="VAR_053569" description="In dbSNP:rs3746802." evidence="3 12">
    <original>I</original>
    <variation>V</variation>
    <location>
        <position position="303"/>
    </location>
</feature>
<feature type="sequence variant" id="VAR_077429" description="In BVVLS1; uncertain significance; dbSNP:rs752218005." evidence="11">
    <original>A</original>
    <variation>V</variation>
    <location>
        <position position="312"/>
    </location>
</feature>
<feature type="sequence variant" id="VAR_077430" description="In BVVLS1; uncertain significance; dbSNP:rs797045195." evidence="12">
    <original>P</original>
    <variation>S</variation>
    <location>
        <position position="319"/>
    </location>
</feature>
<feature type="sequence variant" id="VAR_077431" description="In BVVLS1; uncertain significance; dbSNP:rs797045196." evidence="10">
    <original>G</original>
    <variation>V</variation>
    <location>
        <position position="330"/>
    </location>
</feature>
<feature type="sequence variant" id="VAR_063698" description="No effect on riboflavin transport; no effect on localization to cell membrane; dbSNP:rs76947760." evidence="4 9">
    <original>L</original>
    <variation>M</variation>
    <location>
        <position position="350"/>
    </location>
</feature>
<feature type="sequence variant" id="VAR_077432" description="In BVVLS1; uncertain significance; dbSNP:rs1219868273." evidence="11">
    <original>G</original>
    <variation>D</variation>
    <location>
        <position position="375"/>
    </location>
</feature>
<feature type="sequence variant" id="VAR_063699" description="In dbSNP:rs910857.">
    <original>S</original>
    <variation>R</variation>
    <location>
        <position position="411"/>
    </location>
</feature>
<feature type="sequence variant" id="VAR_063700" description="In BVVLS1; dbSNP:rs267606687." evidence="4 12">
    <original>V</original>
    <variation>A</variation>
    <location>
        <position position="413"/>
    </location>
</feature>
<feature type="sequence variant" id="VAR_063701" description="In BVVLS1; dbSNP:rs779750163." evidence="4">
    <original>F</original>
    <variation>L</variation>
    <location>
        <position position="457"/>
    </location>
</feature>
<feature type="mutagenesis site" description="No effect on cell surface localization." evidence="8">
    <original>C</original>
    <variation>A</variation>
    <location>
        <position position="326"/>
    </location>
</feature>
<feature type="mutagenesis site" description="Abolishes cell surface localization." evidence="8">
    <original>C</original>
    <variation>A</variation>
    <location>
        <position position="386"/>
    </location>
</feature>
<feature type="mutagenesis site" description="No effect on cell surface localization." evidence="8">
    <original>R</original>
    <variation>A</variation>
    <location>
        <position position="455"/>
    </location>
</feature>
<feature type="mutagenesis site" description="Abolishes cell surface localization." evidence="8">
    <original>C</original>
    <variation>A</variation>
    <location>
        <position position="463"/>
    </location>
</feature>
<feature type="mutagenesis site" description="Abolishes cell surface localization." evidence="8">
    <original>C</original>
    <variation>A</variation>
    <location>
        <position position="467"/>
    </location>
</feature>
<feature type="sequence conflict" description="In Ref. 3; BAF84395." evidence="19" ref="3">
    <original>V</original>
    <variation>D</variation>
    <location>
        <position position="11"/>
    </location>
</feature>
<feature type="sequence conflict" description="In Ref. 3; BAC11113." evidence="19" ref="3">
    <original>L</original>
    <variation>P</variation>
    <location>
        <position position="199"/>
    </location>
</feature>